<comment type="function">
    <text evidence="1">Catalyzes the NAD(P)-dependent oxidation of 4-(phosphooxy)-L-threonine (HTP) into 2-amino-3-oxo-4-(phosphooxy)butyric acid which spontaneously decarboxylates to form 3-amino-2-oxopropyl phosphate (AHAP).</text>
</comment>
<comment type="catalytic activity">
    <reaction evidence="1">
        <text>4-(phosphooxy)-L-threonine + NAD(+) = 3-amino-2-oxopropyl phosphate + CO2 + NADH</text>
        <dbReference type="Rhea" id="RHEA:32275"/>
        <dbReference type="ChEBI" id="CHEBI:16526"/>
        <dbReference type="ChEBI" id="CHEBI:57279"/>
        <dbReference type="ChEBI" id="CHEBI:57540"/>
        <dbReference type="ChEBI" id="CHEBI:57945"/>
        <dbReference type="ChEBI" id="CHEBI:58452"/>
        <dbReference type="EC" id="1.1.1.262"/>
    </reaction>
</comment>
<comment type="cofactor">
    <cofactor evidence="1">
        <name>Zn(2+)</name>
        <dbReference type="ChEBI" id="CHEBI:29105"/>
    </cofactor>
    <cofactor evidence="1">
        <name>Mg(2+)</name>
        <dbReference type="ChEBI" id="CHEBI:18420"/>
    </cofactor>
    <cofactor evidence="1">
        <name>Co(2+)</name>
        <dbReference type="ChEBI" id="CHEBI:48828"/>
    </cofactor>
    <text evidence="1">Binds 1 divalent metal cation per subunit. Can use ions such as Zn(2+), Mg(2+) or Co(2+).</text>
</comment>
<comment type="pathway">
    <text evidence="1">Cofactor biosynthesis; pyridoxine 5'-phosphate biosynthesis; pyridoxine 5'-phosphate from D-erythrose 4-phosphate: step 4/5.</text>
</comment>
<comment type="subunit">
    <text evidence="1">Homodimer.</text>
</comment>
<comment type="subcellular location">
    <subcellularLocation>
        <location evidence="1">Cytoplasm</location>
    </subcellularLocation>
</comment>
<comment type="miscellaneous">
    <text evidence="1">The active site is located at the dimer interface.</text>
</comment>
<comment type="similarity">
    <text evidence="1">Belongs to the PdxA family.</text>
</comment>
<gene>
    <name evidence="1" type="primary">pdxA</name>
    <name type="ordered locus">ZMO1313</name>
</gene>
<sequence length="335" mass="35453">MKPLAVTLGDPSGIGPEIVAKAWSRRKSDQIMPFFAIGSAASIQAVSSIPVVAITDPNEAISIFDQALPVWDIPSKETITPGKPNKAGAEVAFAALEKGVALVKQGQASALVTAPVSKAELYQVGFTFPGQTEFVANRCGIAADDAVMMLAGPDLRTVPLTIHIPYRDVLEQLTPKLIISRARVTVEDLKRNFAIPSPRLVVAGLNPHAGENGTIGREEIDSIEPAIRQLQAENIDIKGPFAADTLFSPRARATYDVALCPTHDQALIPIKTINFDNGVNTTLGLPIIRTSPDHGTAFPLAGKNKADEGAMVAALVMAANSAHNRQAYAQNSIDG</sequence>
<dbReference type="EC" id="1.1.1.262" evidence="1"/>
<dbReference type="EMBL" id="AE008692">
    <property type="protein sequence ID" value="AAV89937.1"/>
    <property type="molecule type" value="Genomic_DNA"/>
</dbReference>
<dbReference type="RefSeq" id="WP_011241114.1">
    <property type="nucleotide sequence ID" value="NZ_CP035711.1"/>
</dbReference>
<dbReference type="SMR" id="Q5NMX3"/>
<dbReference type="STRING" id="264203.ZMO1313"/>
<dbReference type="KEGG" id="zmo:ZMO1313"/>
<dbReference type="eggNOG" id="COG1995">
    <property type="taxonomic scope" value="Bacteria"/>
</dbReference>
<dbReference type="HOGENOM" id="CLU_040168_2_0_5"/>
<dbReference type="UniPathway" id="UPA00244">
    <property type="reaction ID" value="UER00312"/>
</dbReference>
<dbReference type="Proteomes" id="UP000001173">
    <property type="component" value="Chromosome"/>
</dbReference>
<dbReference type="GO" id="GO:0005737">
    <property type="term" value="C:cytoplasm"/>
    <property type="evidence" value="ECO:0007669"/>
    <property type="project" value="UniProtKB-SubCell"/>
</dbReference>
<dbReference type="GO" id="GO:0050570">
    <property type="term" value="F:4-hydroxythreonine-4-phosphate dehydrogenase activity"/>
    <property type="evidence" value="ECO:0007669"/>
    <property type="project" value="UniProtKB-UniRule"/>
</dbReference>
<dbReference type="GO" id="GO:0050897">
    <property type="term" value="F:cobalt ion binding"/>
    <property type="evidence" value="ECO:0007669"/>
    <property type="project" value="UniProtKB-UniRule"/>
</dbReference>
<dbReference type="GO" id="GO:0000287">
    <property type="term" value="F:magnesium ion binding"/>
    <property type="evidence" value="ECO:0007669"/>
    <property type="project" value="UniProtKB-UniRule"/>
</dbReference>
<dbReference type="GO" id="GO:0051287">
    <property type="term" value="F:NAD binding"/>
    <property type="evidence" value="ECO:0007669"/>
    <property type="project" value="InterPro"/>
</dbReference>
<dbReference type="GO" id="GO:0008270">
    <property type="term" value="F:zinc ion binding"/>
    <property type="evidence" value="ECO:0007669"/>
    <property type="project" value="UniProtKB-UniRule"/>
</dbReference>
<dbReference type="GO" id="GO:0042823">
    <property type="term" value="P:pyridoxal phosphate biosynthetic process"/>
    <property type="evidence" value="ECO:0007669"/>
    <property type="project" value="UniProtKB-UniRule"/>
</dbReference>
<dbReference type="GO" id="GO:0008615">
    <property type="term" value="P:pyridoxine biosynthetic process"/>
    <property type="evidence" value="ECO:0007669"/>
    <property type="project" value="UniProtKB-UniRule"/>
</dbReference>
<dbReference type="Gene3D" id="3.40.718.10">
    <property type="entry name" value="Isopropylmalate Dehydrogenase"/>
    <property type="match status" value="1"/>
</dbReference>
<dbReference type="HAMAP" id="MF_00536">
    <property type="entry name" value="PdxA"/>
    <property type="match status" value="1"/>
</dbReference>
<dbReference type="InterPro" id="IPR037510">
    <property type="entry name" value="PdxA"/>
</dbReference>
<dbReference type="InterPro" id="IPR005255">
    <property type="entry name" value="PdxA_fam"/>
</dbReference>
<dbReference type="NCBIfam" id="TIGR00557">
    <property type="entry name" value="pdxA"/>
    <property type="match status" value="1"/>
</dbReference>
<dbReference type="NCBIfam" id="NF003699">
    <property type="entry name" value="PRK05312.1"/>
    <property type="match status" value="1"/>
</dbReference>
<dbReference type="PANTHER" id="PTHR30004">
    <property type="entry name" value="4-HYDROXYTHREONINE-4-PHOSPHATE DEHYDROGENASE"/>
    <property type="match status" value="1"/>
</dbReference>
<dbReference type="PANTHER" id="PTHR30004:SF6">
    <property type="entry name" value="D-THREONATE 4-PHOSPHATE DEHYDROGENASE"/>
    <property type="match status" value="1"/>
</dbReference>
<dbReference type="Pfam" id="PF04166">
    <property type="entry name" value="PdxA"/>
    <property type="match status" value="1"/>
</dbReference>
<dbReference type="SUPFAM" id="SSF53659">
    <property type="entry name" value="Isocitrate/Isopropylmalate dehydrogenase-like"/>
    <property type="match status" value="1"/>
</dbReference>
<keyword id="KW-0170">Cobalt</keyword>
<keyword id="KW-0963">Cytoplasm</keyword>
<keyword id="KW-0460">Magnesium</keyword>
<keyword id="KW-0479">Metal-binding</keyword>
<keyword id="KW-0520">NAD</keyword>
<keyword id="KW-0521">NADP</keyword>
<keyword id="KW-0560">Oxidoreductase</keyword>
<keyword id="KW-0664">Pyridoxine biosynthesis</keyword>
<keyword id="KW-1185">Reference proteome</keyword>
<keyword id="KW-0862">Zinc</keyword>
<protein>
    <recommendedName>
        <fullName evidence="1">4-hydroxythreonine-4-phosphate dehydrogenase</fullName>
        <ecNumber evidence="1">1.1.1.262</ecNumber>
    </recommendedName>
    <alternativeName>
        <fullName evidence="1">4-(phosphohydroxy)-L-threonine dehydrogenase</fullName>
    </alternativeName>
</protein>
<reference key="1">
    <citation type="journal article" date="2005" name="Nat. Biotechnol.">
        <title>The genome sequence of the ethanologenic bacterium Zymomonas mobilis ZM4.</title>
        <authorList>
            <person name="Seo J.-S."/>
            <person name="Chong H."/>
            <person name="Park H.S."/>
            <person name="Yoon K.-O."/>
            <person name="Jung C."/>
            <person name="Kim J.J."/>
            <person name="Hong J.H."/>
            <person name="Kim H."/>
            <person name="Kim J.-H."/>
            <person name="Kil J.-I."/>
            <person name="Park C.J."/>
            <person name="Oh H.-M."/>
            <person name="Lee J.-S."/>
            <person name="Jin S.-J."/>
            <person name="Um H.-W."/>
            <person name="Lee H.-J."/>
            <person name="Oh S.-J."/>
            <person name="Kim J.Y."/>
            <person name="Kang H.L."/>
            <person name="Lee S.Y."/>
            <person name="Lee K.J."/>
            <person name="Kang H.S."/>
        </authorList>
    </citation>
    <scope>NUCLEOTIDE SEQUENCE [LARGE SCALE GENOMIC DNA]</scope>
    <source>
        <strain>ATCC 31821 / ZM4 / CP4</strain>
    </source>
</reference>
<evidence type="ECO:0000255" key="1">
    <source>
        <dbReference type="HAMAP-Rule" id="MF_00536"/>
    </source>
</evidence>
<accession>Q5NMX3</accession>
<feature type="chain" id="PRO_1000051526" description="4-hydroxythreonine-4-phosphate dehydrogenase">
    <location>
        <begin position="1"/>
        <end position="335"/>
    </location>
</feature>
<feature type="binding site" evidence="1">
    <location>
        <position position="132"/>
    </location>
    <ligand>
        <name>substrate</name>
    </ligand>
</feature>
<feature type="binding site" evidence="1">
    <location>
        <position position="163"/>
    </location>
    <ligand>
        <name>a divalent metal cation</name>
        <dbReference type="ChEBI" id="CHEBI:60240"/>
        <note>ligand shared between dimeric partners</note>
    </ligand>
</feature>
<feature type="binding site" evidence="1">
    <location>
        <position position="208"/>
    </location>
    <ligand>
        <name>a divalent metal cation</name>
        <dbReference type="ChEBI" id="CHEBI:60240"/>
        <note>ligand shared between dimeric partners</note>
    </ligand>
</feature>
<feature type="binding site" evidence="1">
    <location>
        <position position="263"/>
    </location>
    <ligand>
        <name>a divalent metal cation</name>
        <dbReference type="ChEBI" id="CHEBI:60240"/>
        <note>ligand shared between dimeric partners</note>
    </ligand>
</feature>
<feature type="binding site" evidence="1">
    <location>
        <position position="271"/>
    </location>
    <ligand>
        <name>substrate</name>
    </ligand>
</feature>
<feature type="binding site" evidence="1">
    <location>
        <position position="280"/>
    </location>
    <ligand>
        <name>substrate</name>
    </ligand>
</feature>
<feature type="binding site" evidence="1">
    <location>
        <position position="289"/>
    </location>
    <ligand>
        <name>substrate</name>
    </ligand>
</feature>
<organism>
    <name type="scientific">Zymomonas mobilis subsp. mobilis (strain ATCC 31821 / ZM4 / CP4)</name>
    <dbReference type="NCBI Taxonomy" id="264203"/>
    <lineage>
        <taxon>Bacteria</taxon>
        <taxon>Pseudomonadati</taxon>
        <taxon>Pseudomonadota</taxon>
        <taxon>Alphaproteobacteria</taxon>
        <taxon>Sphingomonadales</taxon>
        <taxon>Zymomonadaceae</taxon>
        <taxon>Zymomonas</taxon>
    </lineage>
</organism>
<proteinExistence type="inferred from homology"/>
<name>PDXA_ZYMMO</name>